<accession>Q04IJ8</accession>
<dbReference type="EC" id="6.3.1.1" evidence="1"/>
<dbReference type="EMBL" id="CP000410">
    <property type="protein sequence ID" value="ABJ54080.1"/>
    <property type="molecule type" value="Genomic_DNA"/>
</dbReference>
<dbReference type="RefSeq" id="WP_000747995.1">
    <property type="nucleotide sequence ID" value="NZ_JAMLJR010000010.1"/>
</dbReference>
<dbReference type="SMR" id="Q04IJ8"/>
<dbReference type="PaxDb" id="373153-SPD_1768"/>
<dbReference type="KEGG" id="spd:SPD_1768"/>
<dbReference type="eggNOG" id="COG2502">
    <property type="taxonomic scope" value="Bacteria"/>
</dbReference>
<dbReference type="HOGENOM" id="CLU_071543_0_0_9"/>
<dbReference type="BioCyc" id="SPNE373153:G1G6V-1911-MONOMER"/>
<dbReference type="UniPathway" id="UPA00134">
    <property type="reaction ID" value="UER00194"/>
</dbReference>
<dbReference type="Proteomes" id="UP000001452">
    <property type="component" value="Chromosome"/>
</dbReference>
<dbReference type="GO" id="GO:0005829">
    <property type="term" value="C:cytosol"/>
    <property type="evidence" value="ECO:0007669"/>
    <property type="project" value="TreeGrafter"/>
</dbReference>
<dbReference type="GO" id="GO:0004071">
    <property type="term" value="F:aspartate-ammonia ligase activity"/>
    <property type="evidence" value="ECO:0007669"/>
    <property type="project" value="UniProtKB-UniRule"/>
</dbReference>
<dbReference type="GO" id="GO:0005524">
    <property type="term" value="F:ATP binding"/>
    <property type="evidence" value="ECO:0007669"/>
    <property type="project" value="UniProtKB-UniRule"/>
</dbReference>
<dbReference type="GO" id="GO:0140096">
    <property type="term" value="F:catalytic activity, acting on a protein"/>
    <property type="evidence" value="ECO:0007669"/>
    <property type="project" value="UniProtKB-ARBA"/>
</dbReference>
<dbReference type="GO" id="GO:0016740">
    <property type="term" value="F:transferase activity"/>
    <property type="evidence" value="ECO:0007669"/>
    <property type="project" value="UniProtKB-ARBA"/>
</dbReference>
<dbReference type="GO" id="GO:0070981">
    <property type="term" value="P:L-asparagine biosynthetic process"/>
    <property type="evidence" value="ECO:0007669"/>
    <property type="project" value="UniProtKB-UniRule"/>
</dbReference>
<dbReference type="CDD" id="cd00645">
    <property type="entry name" value="AsnA"/>
    <property type="match status" value="1"/>
</dbReference>
<dbReference type="Gene3D" id="3.30.930.10">
    <property type="entry name" value="Bira Bifunctional Protein, Domain 2"/>
    <property type="match status" value="1"/>
</dbReference>
<dbReference type="HAMAP" id="MF_00555">
    <property type="entry name" value="AsnA"/>
    <property type="match status" value="1"/>
</dbReference>
<dbReference type="InterPro" id="IPR006195">
    <property type="entry name" value="aa-tRNA-synth_II"/>
</dbReference>
<dbReference type="InterPro" id="IPR045864">
    <property type="entry name" value="aa-tRNA-synth_II/BPL/LPL"/>
</dbReference>
<dbReference type="InterPro" id="IPR004618">
    <property type="entry name" value="AsnA"/>
</dbReference>
<dbReference type="NCBIfam" id="TIGR00669">
    <property type="entry name" value="asnA"/>
    <property type="match status" value="1"/>
</dbReference>
<dbReference type="PANTHER" id="PTHR30073">
    <property type="entry name" value="ASPARTATE--AMMONIA LIGASE"/>
    <property type="match status" value="1"/>
</dbReference>
<dbReference type="PANTHER" id="PTHR30073:SF5">
    <property type="entry name" value="ASPARTATE--AMMONIA LIGASE"/>
    <property type="match status" value="1"/>
</dbReference>
<dbReference type="Pfam" id="PF03590">
    <property type="entry name" value="AsnA"/>
    <property type="match status" value="1"/>
</dbReference>
<dbReference type="PIRSF" id="PIRSF001555">
    <property type="entry name" value="Asp_ammon_ligase"/>
    <property type="match status" value="1"/>
</dbReference>
<dbReference type="SUPFAM" id="SSF55681">
    <property type="entry name" value="Class II aaRS and biotin synthetases"/>
    <property type="match status" value="1"/>
</dbReference>
<dbReference type="PROSITE" id="PS50862">
    <property type="entry name" value="AA_TRNA_LIGASE_II"/>
    <property type="match status" value="1"/>
</dbReference>
<keyword id="KW-0028">Amino-acid biosynthesis</keyword>
<keyword id="KW-0061">Asparagine biosynthesis</keyword>
<keyword id="KW-0067">ATP-binding</keyword>
<keyword id="KW-0963">Cytoplasm</keyword>
<keyword id="KW-0436">Ligase</keyword>
<keyword id="KW-0547">Nucleotide-binding</keyword>
<keyword id="KW-1185">Reference proteome</keyword>
<organism>
    <name type="scientific">Streptococcus pneumoniae serotype 2 (strain D39 / NCTC 7466)</name>
    <dbReference type="NCBI Taxonomy" id="373153"/>
    <lineage>
        <taxon>Bacteria</taxon>
        <taxon>Bacillati</taxon>
        <taxon>Bacillota</taxon>
        <taxon>Bacilli</taxon>
        <taxon>Lactobacillales</taxon>
        <taxon>Streptococcaceae</taxon>
        <taxon>Streptococcus</taxon>
    </lineage>
</organism>
<sequence length="330" mass="37608">MKKSFIHQQEEISFVKNTFTQYLKDKLEVVEVQGPILSKVGDGMQDNLSGVENPVSVKVLQIPDATYEVVHSLAKWKRHTLARFGFGEGEGLFVHMKALRPDEDSLDATHSVYVDQWDWEKVIPNGKRNIVYLKETVEKIYKAIRLTELAVEARYDIESILPKQITFIHTEELVERYPDLTSKERENAICKEFGAVFLIGIGGELPDGKPHDGRAPDYDDWTSESENGYKGLNGDILVWNESLGGAFELSSMGIRVDEETLRRQVEITGDEDRLELEWHKSLLNGLFPLTIGGGIGQSRMAMFLLRKRHIGEVQTSVWPQEVRDTYENIL</sequence>
<protein>
    <recommendedName>
        <fullName evidence="1">Aspartate--ammonia ligase</fullName>
        <ecNumber evidence="1">6.3.1.1</ecNumber>
    </recommendedName>
    <alternativeName>
        <fullName evidence="1">Asparagine synthetase A</fullName>
    </alternativeName>
</protein>
<gene>
    <name evidence="1" type="primary">asnA</name>
    <name type="ordered locus">SPD_1768</name>
</gene>
<name>ASNA_STRP2</name>
<proteinExistence type="inferred from homology"/>
<feature type="chain" id="PRO_1000017964" description="Aspartate--ammonia ligase">
    <location>
        <begin position="1"/>
        <end position="330"/>
    </location>
</feature>
<reference key="1">
    <citation type="journal article" date="2007" name="J. Bacteriol.">
        <title>Genome sequence of Avery's virulent serotype 2 strain D39 of Streptococcus pneumoniae and comparison with that of unencapsulated laboratory strain R6.</title>
        <authorList>
            <person name="Lanie J.A."/>
            <person name="Ng W.-L."/>
            <person name="Kazmierczak K.M."/>
            <person name="Andrzejewski T.M."/>
            <person name="Davidsen T.M."/>
            <person name="Wayne K.J."/>
            <person name="Tettelin H."/>
            <person name="Glass J.I."/>
            <person name="Winkler M.E."/>
        </authorList>
    </citation>
    <scope>NUCLEOTIDE SEQUENCE [LARGE SCALE GENOMIC DNA]</scope>
    <source>
        <strain>D39 / NCTC 7466</strain>
    </source>
</reference>
<comment type="catalytic activity">
    <reaction evidence="1">
        <text>L-aspartate + NH4(+) + ATP = L-asparagine + AMP + diphosphate + H(+)</text>
        <dbReference type="Rhea" id="RHEA:11372"/>
        <dbReference type="ChEBI" id="CHEBI:15378"/>
        <dbReference type="ChEBI" id="CHEBI:28938"/>
        <dbReference type="ChEBI" id="CHEBI:29991"/>
        <dbReference type="ChEBI" id="CHEBI:30616"/>
        <dbReference type="ChEBI" id="CHEBI:33019"/>
        <dbReference type="ChEBI" id="CHEBI:58048"/>
        <dbReference type="ChEBI" id="CHEBI:456215"/>
        <dbReference type="EC" id="6.3.1.1"/>
    </reaction>
</comment>
<comment type="pathway">
    <text evidence="1">Amino-acid biosynthesis; L-asparagine biosynthesis; L-asparagine from L-aspartate (ammonia route): step 1/1.</text>
</comment>
<comment type="subcellular location">
    <subcellularLocation>
        <location evidence="1">Cytoplasm</location>
    </subcellularLocation>
</comment>
<comment type="similarity">
    <text evidence="1">Belongs to the class-II aminoacyl-tRNA synthetase family. AsnA subfamily.</text>
</comment>
<evidence type="ECO:0000255" key="1">
    <source>
        <dbReference type="HAMAP-Rule" id="MF_00555"/>
    </source>
</evidence>